<name>YCF4_PANGI</name>
<reference key="1">
    <citation type="journal article" date="2004" name="DNA Res.">
        <title>Complete chloroplast genome sequence from Korea ginseng (Panax schinseng Nees) and comparative analysis of sequence evolution among 17 vascular plants.</title>
        <authorList>
            <person name="Kim K.-J."/>
            <person name="Lee H.-L."/>
        </authorList>
    </citation>
    <scope>NUCLEOTIDE SEQUENCE [LARGE SCALE GENOMIC DNA]</scope>
</reference>
<protein>
    <recommendedName>
        <fullName evidence="1">Photosystem I assembly protein Ycf4</fullName>
    </recommendedName>
</protein>
<feature type="chain" id="PRO_0000217620" description="Photosystem I assembly protein Ycf4">
    <location>
        <begin position="1"/>
        <end position="184"/>
    </location>
</feature>
<feature type="transmembrane region" description="Helical" evidence="1">
    <location>
        <begin position="22"/>
        <end position="42"/>
    </location>
</feature>
<feature type="transmembrane region" description="Helical" evidence="1">
    <location>
        <begin position="57"/>
        <end position="77"/>
    </location>
</feature>
<dbReference type="EMBL" id="AY582139">
    <property type="protein sequence ID" value="AAT98520.1"/>
    <property type="molecule type" value="Genomic_DNA"/>
</dbReference>
<dbReference type="RefSeq" id="YP_086977.1">
    <property type="nucleotide sequence ID" value="NC_006290.1"/>
</dbReference>
<dbReference type="GeneID" id="3021517"/>
<dbReference type="GO" id="GO:0009535">
    <property type="term" value="C:chloroplast thylakoid membrane"/>
    <property type="evidence" value="ECO:0007669"/>
    <property type="project" value="UniProtKB-SubCell"/>
</dbReference>
<dbReference type="GO" id="GO:0009522">
    <property type="term" value="C:photosystem I"/>
    <property type="evidence" value="ECO:0007669"/>
    <property type="project" value="InterPro"/>
</dbReference>
<dbReference type="GO" id="GO:0015979">
    <property type="term" value="P:photosynthesis"/>
    <property type="evidence" value="ECO:0007669"/>
    <property type="project" value="UniProtKB-UniRule"/>
</dbReference>
<dbReference type="HAMAP" id="MF_00437">
    <property type="entry name" value="Ycf4"/>
    <property type="match status" value="1"/>
</dbReference>
<dbReference type="InterPro" id="IPR003359">
    <property type="entry name" value="PSI_Ycf4_assembly"/>
</dbReference>
<dbReference type="PANTHER" id="PTHR33288">
    <property type="match status" value="1"/>
</dbReference>
<dbReference type="PANTHER" id="PTHR33288:SF4">
    <property type="entry name" value="PHOTOSYSTEM I ASSEMBLY PROTEIN YCF4"/>
    <property type="match status" value="1"/>
</dbReference>
<dbReference type="Pfam" id="PF02392">
    <property type="entry name" value="Ycf4"/>
    <property type="match status" value="1"/>
</dbReference>
<comment type="function">
    <text evidence="1">Seems to be required for the assembly of the photosystem I complex.</text>
</comment>
<comment type="subcellular location">
    <subcellularLocation>
        <location evidence="1">Plastid</location>
        <location evidence="1">Chloroplast thylakoid membrane</location>
        <topology evidence="1">Multi-pass membrane protein</topology>
    </subcellularLocation>
</comment>
<comment type="similarity">
    <text evidence="1">Belongs to the Ycf4 family.</text>
</comment>
<evidence type="ECO:0000255" key="1">
    <source>
        <dbReference type="HAMAP-Rule" id="MF_00437"/>
    </source>
</evidence>
<geneLocation type="chloroplast"/>
<organism>
    <name type="scientific">Panax ginseng</name>
    <name type="common">Korean ginseng</name>
    <dbReference type="NCBI Taxonomy" id="4054"/>
    <lineage>
        <taxon>Eukaryota</taxon>
        <taxon>Viridiplantae</taxon>
        <taxon>Streptophyta</taxon>
        <taxon>Embryophyta</taxon>
        <taxon>Tracheophyta</taxon>
        <taxon>Spermatophyta</taxon>
        <taxon>Magnoliopsida</taxon>
        <taxon>eudicotyledons</taxon>
        <taxon>Gunneridae</taxon>
        <taxon>Pentapetalae</taxon>
        <taxon>asterids</taxon>
        <taxon>campanulids</taxon>
        <taxon>Apiales</taxon>
        <taxon>Araliaceae</taxon>
        <taxon>Panax</taxon>
    </lineage>
</organism>
<proteinExistence type="inferred from homology"/>
<keyword id="KW-0150">Chloroplast</keyword>
<keyword id="KW-0472">Membrane</keyword>
<keyword id="KW-0602">Photosynthesis</keyword>
<keyword id="KW-0934">Plastid</keyword>
<keyword id="KW-0793">Thylakoid</keyword>
<keyword id="KW-0812">Transmembrane</keyword>
<keyword id="KW-1133">Transmembrane helix</keyword>
<sequence>MSCRSEHIWIEPITGSRKTSNFCWAVILFLGSLGFLLVGTSSYLGRNLISLFPSQQILFFPQGIVMSFYGIAGLFISSYLWCTLSLNVGGGYDRFDRKEGMVCIFRWGFPGKNRRIFLRFLIKDIQSVRIEAKEGIYARRVLYMDIRGQGAIPLTRTDENVTPREIEQKAAELAYFLRVPIEVF</sequence>
<accession>Q68RZ5</accession>
<gene>
    <name evidence="1" type="primary">ycf4</name>
    <name type="ORF">PSC0621</name>
</gene>